<accession>Q5YCU7</accession>
<protein>
    <recommendedName>
        <fullName>Saitohin</fullName>
    </recommendedName>
</protein>
<feature type="chain" id="PRO_0000072271" description="Saitohin">
    <location>
        <begin position="1"/>
        <end position="128"/>
    </location>
</feature>
<feature type="region of interest" description="Disordered" evidence="2">
    <location>
        <begin position="77"/>
        <end position="128"/>
    </location>
</feature>
<evidence type="ECO:0000250" key="1"/>
<evidence type="ECO:0000256" key="2">
    <source>
        <dbReference type="SAM" id="MobiDB-lite"/>
    </source>
</evidence>
<name>STH_GORGO</name>
<dbReference type="EMBL" id="AY574184">
    <property type="protein sequence ID" value="AAS91742.1"/>
    <property type="molecule type" value="Genomic_DNA"/>
</dbReference>
<dbReference type="RefSeq" id="XP_018882100.1">
    <property type="nucleotide sequence ID" value="XM_019026555.1"/>
</dbReference>
<dbReference type="RefSeq" id="XP_055243810.2">
    <property type="nucleotide sequence ID" value="XM_055387835.2"/>
</dbReference>
<dbReference type="FunCoup" id="Q5YCU7">
    <property type="interactions" value="3"/>
</dbReference>
<dbReference type="GeneID" id="101139049"/>
<dbReference type="InParanoid" id="Q5YCU7"/>
<dbReference type="Proteomes" id="UP000001519">
    <property type="component" value="Unplaced"/>
</dbReference>
<dbReference type="GO" id="GO:0005737">
    <property type="term" value="C:cytoplasm"/>
    <property type="evidence" value="ECO:0007669"/>
    <property type="project" value="UniProtKB-SubCell"/>
</dbReference>
<dbReference type="GO" id="GO:0005634">
    <property type="term" value="C:nucleus"/>
    <property type="evidence" value="ECO:0007669"/>
    <property type="project" value="UniProtKB-SubCell"/>
</dbReference>
<sequence length="128" mass="13734">MSEGGGRVSRIFAAPTRLCRWPALIECGVNLTQPLCEWMIQVARDRTLSLAWEVASLLTLSSSEVGLEGVGTIWPSSYSSEESSRNGAEQGRQLSIEGPFQGQNCPSHPAAALPLPMRGESQATSCQV</sequence>
<reference key="1">
    <citation type="journal article" date="2004" name="Gene">
        <title>Tau gene (MAPT) sequence variation among primates.</title>
        <authorList>
            <person name="Holzer M."/>
            <person name="Craxton M."/>
            <person name="Jakes R."/>
            <person name="Arendt T."/>
            <person name="Goedert M."/>
        </authorList>
    </citation>
    <scope>NUCLEOTIDE SEQUENCE [GENOMIC DNA]</scope>
</reference>
<proteinExistence type="inferred from homology"/>
<keyword id="KW-0963">Cytoplasm</keyword>
<keyword id="KW-0539">Nucleus</keyword>
<keyword id="KW-1185">Reference proteome</keyword>
<gene>
    <name type="primary">STH</name>
</gene>
<comment type="subunit">
    <text evidence="1">Interacts with PRDX6.</text>
</comment>
<comment type="subcellular location">
    <subcellularLocation>
        <location evidence="1">Cytoplasm</location>
    </subcellularLocation>
    <subcellularLocation>
        <location evidence="1">Nucleus</location>
    </subcellularLocation>
</comment>
<organism>
    <name type="scientific">Gorilla gorilla gorilla</name>
    <name type="common">Western lowland gorilla</name>
    <dbReference type="NCBI Taxonomy" id="9595"/>
    <lineage>
        <taxon>Eukaryota</taxon>
        <taxon>Metazoa</taxon>
        <taxon>Chordata</taxon>
        <taxon>Craniata</taxon>
        <taxon>Vertebrata</taxon>
        <taxon>Euteleostomi</taxon>
        <taxon>Mammalia</taxon>
        <taxon>Eutheria</taxon>
        <taxon>Euarchontoglires</taxon>
        <taxon>Primates</taxon>
        <taxon>Haplorrhini</taxon>
        <taxon>Catarrhini</taxon>
        <taxon>Hominidae</taxon>
        <taxon>Gorilla</taxon>
    </lineage>
</organism>